<gene>
    <name evidence="1" type="primary">fusA</name>
    <name type="ordered locus">OTT_1186</name>
</gene>
<keyword id="KW-0963">Cytoplasm</keyword>
<keyword id="KW-0251">Elongation factor</keyword>
<keyword id="KW-0342">GTP-binding</keyword>
<keyword id="KW-0547">Nucleotide-binding</keyword>
<keyword id="KW-0648">Protein biosynthesis</keyword>
<evidence type="ECO:0000255" key="1">
    <source>
        <dbReference type="HAMAP-Rule" id="MF_00054"/>
    </source>
</evidence>
<reference key="1">
    <citation type="journal article" date="2008" name="DNA Res.">
        <title>The whole-genome sequencing of the obligate intracellular bacterium Orientia tsutsugamushi revealed massive gene amplification during reductive genome evolution.</title>
        <authorList>
            <person name="Nakayama K."/>
            <person name="Yamashita A."/>
            <person name="Kurokawa K."/>
            <person name="Morimoto T."/>
            <person name="Ogawa M."/>
            <person name="Fukuhara M."/>
            <person name="Urakami H."/>
            <person name="Ohnishi M."/>
            <person name="Uchiyama I."/>
            <person name="Ogura Y."/>
            <person name="Ooka T."/>
            <person name="Oshima K."/>
            <person name="Tamura A."/>
            <person name="Hattori M."/>
            <person name="Hayashi T."/>
        </authorList>
    </citation>
    <scope>NUCLEOTIDE SEQUENCE [LARGE SCALE GENOMIC DNA]</scope>
    <source>
        <strain>Ikeda</strain>
    </source>
</reference>
<feature type="chain" id="PRO_1000091743" description="Elongation factor G">
    <location>
        <begin position="1"/>
        <end position="706"/>
    </location>
</feature>
<feature type="domain" description="tr-type G">
    <location>
        <begin position="8"/>
        <end position="297"/>
    </location>
</feature>
<feature type="binding site" evidence="1">
    <location>
        <begin position="17"/>
        <end position="24"/>
    </location>
    <ligand>
        <name>GTP</name>
        <dbReference type="ChEBI" id="CHEBI:37565"/>
    </ligand>
</feature>
<feature type="binding site" evidence="1">
    <location>
        <begin position="95"/>
        <end position="99"/>
    </location>
    <ligand>
        <name>GTP</name>
        <dbReference type="ChEBI" id="CHEBI:37565"/>
    </ligand>
</feature>
<feature type="binding site" evidence="1">
    <location>
        <begin position="149"/>
        <end position="152"/>
    </location>
    <ligand>
        <name>GTP</name>
        <dbReference type="ChEBI" id="CHEBI:37565"/>
    </ligand>
</feature>
<comment type="function">
    <text evidence="1">Catalyzes the GTP-dependent ribosomal translocation step during translation elongation. During this step, the ribosome changes from the pre-translocational (PRE) to the post-translocational (POST) state as the newly formed A-site-bound peptidyl-tRNA and P-site-bound deacylated tRNA move to the P and E sites, respectively. Catalyzes the coordinated movement of the two tRNA molecules, the mRNA and conformational changes in the ribosome.</text>
</comment>
<comment type="subcellular location">
    <subcellularLocation>
        <location evidence="1">Cytoplasm</location>
    </subcellularLocation>
</comment>
<comment type="similarity">
    <text evidence="1">Belongs to the TRAFAC class translation factor GTPase superfamily. Classic translation factor GTPase family. EF-G/EF-2 subfamily.</text>
</comment>
<organism>
    <name type="scientific">Orientia tsutsugamushi (strain Ikeda)</name>
    <name type="common">Rickettsia tsutsugamushi</name>
    <dbReference type="NCBI Taxonomy" id="334380"/>
    <lineage>
        <taxon>Bacteria</taxon>
        <taxon>Pseudomonadati</taxon>
        <taxon>Pseudomonadota</taxon>
        <taxon>Alphaproteobacteria</taxon>
        <taxon>Rickettsiales</taxon>
        <taxon>Rickettsiaceae</taxon>
        <taxon>Rickettsieae</taxon>
        <taxon>Orientia</taxon>
    </lineage>
</organism>
<protein>
    <recommendedName>
        <fullName evidence="1">Elongation factor G</fullName>
        <shortName evidence="1">EF-G</shortName>
    </recommendedName>
</protein>
<dbReference type="EMBL" id="AP008981">
    <property type="protein sequence ID" value="BAG40644.1"/>
    <property type="molecule type" value="Genomic_DNA"/>
</dbReference>
<dbReference type="RefSeq" id="WP_012461713.1">
    <property type="nucleotide sequence ID" value="NC_010793.1"/>
</dbReference>
<dbReference type="SMR" id="B3CTE7"/>
<dbReference type="KEGG" id="ott:OTT_1186"/>
<dbReference type="HOGENOM" id="CLU_002794_4_1_5"/>
<dbReference type="OrthoDB" id="9802948at2"/>
<dbReference type="Proteomes" id="UP000001033">
    <property type="component" value="Chromosome"/>
</dbReference>
<dbReference type="GO" id="GO:0005737">
    <property type="term" value="C:cytoplasm"/>
    <property type="evidence" value="ECO:0007669"/>
    <property type="project" value="UniProtKB-SubCell"/>
</dbReference>
<dbReference type="GO" id="GO:0005525">
    <property type="term" value="F:GTP binding"/>
    <property type="evidence" value="ECO:0007669"/>
    <property type="project" value="UniProtKB-UniRule"/>
</dbReference>
<dbReference type="GO" id="GO:0003924">
    <property type="term" value="F:GTPase activity"/>
    <property type="evidence" value="ECO:0007669"/>
    <property type="project" value="InterPro"/>
</dbReference>
<dbReference type="GO" id="GO:0003746">
    <property type="term" value="F:translation elongation factor activity"/>
    <property type="evidence" value="ECO:0007669"/>
    <property type="project" value="UniProtKB-UniRule"/>
</dbReference>
<dbReference type="GO" id="GO:0032790">
    <property type="term" value="P:ribosome disassembly"/>
    <property type="evidence" value="ECO:0007669"/>
    <property type="project" value="TreeGrafter"/>
</dbReference>
<dbReference type="CDD" id="cd01886">
    <property type="entry name" value="EF-G"/>
    <property type="match status" value="1"/>
</dbReference>
<dbReference type="CDD" id="cd16262">
    <property type="entry name" value="EFG_III"/>
    <property type="match status" value="1"/>
</dbReference>
<dbReference type="CDD" id="cd01434">
    <property type="entry name" value="EFG_mtEFG1_IV"/>
    <property type="match status" value="1"/>
</dbReference>
<dbReference type="CDD" id="cd03713">
    <property type="entry name" value="EFG_mtEFG_C"/>
    <property type="match status" value="1"/>
</dbReference>
<dbReference type="CDD" id="cd04088">
    <property type="entry name" value="EFG_mtEFG_II"/>
    <property type="match status" value="1"/>
</dbReference>
<dbReference type="FunFam" id="2.40.30.10:FF:000006">
    <property type="entry name" value="Elongation factor G"/>
    <property type="match status" value="1"/>
</dbReference>
<dbReference type="FunFam" id="3.30.230.10:FF:000003">
    <property type="entry name" value="Elongation factor G"/>
    <property type="match status" value="1"/>
</dbReference>
<dbReference type="FunFam" id="3.30.70.240:FF:000001">
    <property type="entry name" value="Elongation factor G"/>
    <property type="match status" value="1"/>
</dbReference>
<dbReference type="FunFam" id="3.30.70.870:FF:000001">
    <property type="entry name" value="Elongation factor G"/>
    <property type="match status" value="1"/>
</dbReference>
<dbReference type="FunFam" id="3.40.50.300:FF:000029">
    <property type="entry name" value="Elongation factor G"/>
    <property type="match status" value="1"/>
</dbReference>
<dbReference type="Gene3D" id="3.30.230.10">
    <property type="match status" value="1"/>
</dbReference>
<dbReference type="Gene3D" id="3.30.70.240">
    <property type="match status" value="1"/>
</dbReference>
<dbReference type="Gene3D" id="3.30.70.870">
    <property type="entry name" value="Elongation Factor G (Translational Gtpase), domain 3"/>
    <property type="match status" value="1"/>
</dbReference>
<dbReference type="Gene3D" id="3.40.50.300">
    <property type="entry name" value="P-loop containing nucleotide triphosphate hydrolases"/>
    <property type="match status" value="1"/>
</dbReference>
<dbReference type="Gene3D" id="2.40.30.10">
    <property type="entry name" value="Translation factors"/>
    <property type="match status" value="1"/>
</dbReference>
<dbReference type="HAMAP" id="MF_00054_B">
    <property type="entry name" value="EF_G_EF_2_B"/>
    <property type="match status" value="1"/>
</dbReference>
<dbReference type="InterPro" id="IPR053905">
    <property type="entry name" value="EF-G-like_DII"/>
</dbReference>
<dbReference type="InterPro" id="IPR041095">
    <property type="entry name" value="EFG_II"/>
</dbReference>
<dbReference type="InterPro" id="IPR009022">
    <property type="entry name" value="EFG_III"/>
</dbReference>
<dbReference type="InterPro" id="IPR035647">
    <property type="entry name" value="EFG_III/V"/>
</dbReference>
<dbReference type="InterPro" id="IPR047872">
    <property type="entry name" value="EFG_IV"/>
</dbReference>
<dbReference type="InterPro" id="IPR035649">
    <property type="entry name" value="EFG_V"/>
</dbReference>
<dbReference type="InterPro" id="IPR000640">
    <property type="entry name" value="EFG_V-like"/>
</dbReference>
<dbReference type="InterPro" id="IPR031157">
    <property type="entry name" value="G_TR_CS"/>
</dbReference>
<dbReference type="InterPro" id="IPR027417">
    <property type="entry name" value="P-loop_NTPase"/>
</dbReference>
<dbReference type="InterPro" id="IPR020568">
    <property type="entry name" value="Ribosomal_Su5_D2-typ_SF"/>
</dbReference>
<dbReference type="InterPro" id="IPR014721">
    <property type="entry name" value="Ribsml_uS5_D2-typ_fold_subgr"/>
</dbReference>
<dbReference type="InterPro" id="IPR005225">
    <property type="entry name" value="Small_GTP-bd"/>
</dbReference>
<dbReference type="InterPro" id="IPR000795">
    <property type="entry name" value="T_Tr_GTP-bd_dom"/>
</dbReference>
<dbReference type="InterPro" id="IPR009000">
    <property type="entry name" value="Transl_B-barrel_sf"/>
</dbReference>
<dbReference type="InterPro" id="IPR004540">
    <property type="entry name" value="Transl_elong_EFG/EF2"/>
</dbReference>
<dbReference type="InterPro" id="IPR005517">
    <property type="entry name" value="Transl_elong_EFG/EF2_IV"/>
</dbReference>
<dbReference type="NCBIfam" id="TIGR00484">
    <property type="entry name" value="EF-G"/>
    <property type="match status" value="1"/>
</dbReference>
<dbReference type="NCBIfam" id="NF009381">
    <property type="entry name" value="PRK12740.1-5"/>
    <property type="match status" value="1"/>
</dbReference>
<dbReference type="NCBIfam" id="TIGR00231">
    <property type="entry name" value="small_GTP"/>
    <property type="match status" value="1"/>
</dbReference>
<dbReference type="PANTHER" id="PTHR43261:SF1">
    <property type="entry name" value="RIBOSOME-RELEASING FACTOR 2, MITOCHONDRIAL"/>
    <property type="match status" value="1"/>
</dbReference>
<dbReference type="PANTHER" id="PTHR43261">
    <property type="entry name" value="TRANSLATION ELONGATION FACTOR G-RELATED"/>
    <property type="match status" value="1"/>
</dbReference>
<dbReference type="Pfam" id="PF22042">
    <property type="entry name" value="EF-G_D2"/>
    <property type="match status" value="1"/>
</dbReference>
<dbReference type="Pfam" id="PF00679">
    <property type="entry name" value="EFG_C"/>
    <property type="match status" value="1"/>
</dbReference>
<dbReference type="Pfam" id="PF14492">
    <property type="entry name" value="EFG_III"/>
    <property type="match status" value="1"/>
</dbReference>
<dbReference type="Pfam" id="PF03764">
    <property type="entry name" value="EFG_IV"/>
    <property type="match status" value="1"/>
</dbReference>
<dbReference type="Pfam" id="PF00009">
    <property type="entry name" value="GTP_EFTU"/>
    <property type="match status" value="1"/>
</dbReference>
<dbReference type="PRINTS" id="PR00315">
    <property type="entry name" value="ELONGATNFCT"/>
</dbReference>
<dbReference type="SMART" id="SM00838">
    <property type="entry name" value="EFG_C"/>
    <property type="match status" value="1"/>
</dbReference>
<dbReference type="SMART" id="SM00889">
    <property type="entry name" value="EFG_IV"/>
    <property type="match status" value="1"/>
</dbReference>
<dbReference type="SUPFAM" id="SSF54980">
    <property type="entry name" value="EF-G C-terminal domain-like"/>
    <property type="match status" value="2"/>
</dbReference>
<dbReference type="SUPFAM" id="SSF52540">
    <property type="entry name" value="P-loop containing nucleoside triphosphate hydrolases"/>
    <property type="match status" value="1"/>
</dbReference>
<dbReference type="SUPFAM" id="SSF54211">
    <property type="entry name" value="Ribosomal protein S5 domain 2-like"/>
    <property type="match status" value="1"/>
</dbReference>
<dbReference type="SUPFAM" id="SSF50447">
    <property type="entry name" value="Translation proteins"/>
    <property type="match status" value="1"/>
</dbReference>
<dbReference type="PROSITE" id="PS00301">
    <property type="entry name" value="G_TR_1"/>
    <property type="match status" value="1"/>
</dbReference>
<dbReference type="PROSITE" id="PS51722">
    <property type="entry name" value="G_TR_2"/>
    <property type="match status" value="1"/>
</dbReference>
<name>EFG_ORITI</name>
<proteinExistence type="inferred from homology"/>
<sequence>MSENHKLSYVRNIGIGAHIDAGKTTTTERILYYTGVSYSIGEVHDGTTVMDYMKQERDRGITIQSAATTCHWIKKDDCAEQASQKEQEYKINIIDTPGHVDFTIEVGRALRVLDGMIAVFDGVAGVEPQSETVWRQADKYAVPRICFVNKMDRMGADFFRCVQMMKDRLGTKPLVIQLPIGIEDTFKGVIDLVKMKAIVWSNEDLGAKYEYHSIPNNMQAMVEDYRHQLLETVVEVDEEIFNSYVSNEDLSEEDIRKCIRKGAISGLFVPVLCGSAFKNKGVQTLLDAVVDYLPSPNDVNSIKAVDVKTEQEISRKVSVDEQFSALAFKVINDPFVGSLTFIRIYSGKLQTGSTVINTTKNQKERISRMLLMHANNRKDIKEAVAGDIVALTGLKSTTTGDTICSLDSQIILEKIEFPKPVIELAVEPKTPADQEKISAALVKLAAEDPSLVFTVDSETNQMVIKGMGELHLEIIIDRMKEEFKVEANVGAPRVAYRETITQSYTVDYTHKKQTGGAGQFARVKIIFEPLEAGAGFQFESKIVGGAIPKEFIPGVEKGLEEIKESGVVAGYPTIDFKATLIDGSFHEVDSSVLAFEIAAKNAFKEGITKAGPKLLGPIMKVEVISPNEYMGDIIGDLNSRSGVIQSMEPRGNTQIINAYVPLGQMFGYVSTLRSLSQGRAQYSMVFSHYEQVSRSIAEKIQAKDKK</sequence>
<accession>B3CTE7</accession>